<protein>
    <recommendedName>
        <fullName evidence="6">Velvet complex subunit B</fullName>
    </recommendedName>
</protein>
<comment type="function">
    <text evidence="1">Component of the velvet transcription factor complex that controls sexual/asexual developmental ratio in response to light, promoting sexual development in the darkness while stimulating asexual sporulation under illumination (By similarity). The velvet complex acts as a global regulator for secondary metabolite gene expression (By similarity). Component of the velB-VosA heterodimeric complex that plays a dual role in activating genes associated with spore maturation and repressing certain development-associated genes (By similarity). The velB-VosA complex binds DNA through the DNA-binding domain of vosA that recognizes an 11-nucleotide consensus sequence 5'-CTGGCCGCGGC-3' consisting of two motifs in the promoters of key developmental regulatory genes (By similarity).</text>
</comment>
<comment type="subunit">
    <text evidence="1">Component of the heterotrimeric velvet complex composed of laeA, veA and velB; VeA acting as a bridging protein between laeA and velB (By similarity). Forms a heterodimeric complex with vosA; the formation of the velB-vosA complex is light-dependent (By similarity).</text>
</comment>
<comment type="subcellular location">
    <subcellularLocation>
        <location evidence="1">Nucleus</location>
    </subcellularLocation>
    <subcellularLocation>
        <location evidence="1">Cytoplasm</location>
    </subcellularLocation>
    <text evidence="1">Nuclear localization is mediated by veA (By similarity).</text>
</comment>
<comment type="induction">
    <text evidence="4">Expression is down-regulated during fruiting body formation (PubMed:24942908).</text>
</comment>
<comment type="similarity">
    <text evidence="6">Belongs to the velvet family. VelB subfamily.</text>
</comment>
<name>VELB_LACBS</name>
<gene>
    <name evidence="5" type="primary">velB</name>
    <name type="ORF">LACBIDRAFT_292785</name>
</gene>
<reference key="1">
    <citation type="journal article" date="2008" name="Nature">
        <title>The genome of Laccaria bicolor provides insights into mycorrhizal symbiosis.</title>
        <authorList>
            <person name="Martin F."/>
            <person name="Aerts A."/>
            <person name="Ahren D."/>
            <person name="Brun A."/>
            <person name="Danchin E.G.J."/>
            <person name="Duchaussoy F."/>
            <person name="Gibon J."/>
            <person name="Kohler A."/>
            <person name="Lindquist E."/>
            <person name="Pereda V."/>
            <person name="Salamov A."/>
            <person name="Shapiro H.J."/>
            <person name="Wuyts J."/>
            <person name="Blaudez D."/>
            <person name="Buee M."/>
            <person name="Brokstein P."/>
            <person name="Canbaeck B."/>
            <person name="Cohen D."/>
            <person name="Courty P.E."/>
            <person name="Coutinho P.M."/>
            <person name="Delaruelle C."/>
            <person name="Detter J.C."/>
            <person name="Deveau A."/>
            <person name="DiFazio S."/>
            <person name="Duplessis S."/>
            <person name="Fraissinet-Tachet L."/>
            <person name="Lucic E."/>
            <person name="Frey-Klett P."/>
            <person name="Fourrey C."/>
            <person name="Feussner I."/>
            <person name="Gay G."/>
            <person name="Grimwood J."/>
            <person name="Hoegger P.J."/>
            <person name="Jain P."/>
            <person name="Kilaru S."/>
            <person name="Labbe J."/>
            <person name="Lin Y.C."/>
            <person name="Legue V."/>
            <person name="Le Tacon F."/>
            <person name="Marmeisse R."/>
            <person name="Melayah D."/>
            <person name="Montanini B."/>
            <person name="Muratet M."/>
            <person name="Nehls U."/>
            <person name="Niculita-Hirzel H."/>
            <person name="Oudot-Le Secq M.P."/>
            <person name="Peter M."/>
            <person name="Quesneville H."/>
            <person name="Rajashekar B."/>
            <person name="Reich M."/>
            <person name="Rouhier N."/>
            <person name="Schmutz J."/>
            <person name="Yin T."/>
            <person name="Chalot M."/>
            <person name="Henrissat B."/>
            <person name="Kuees U."/>
            <person name="Lucas S."/>
            <person name="Van de Peer Y."/>
            <person name="Podila G.K."/>
            <person name="Polle A."/>
            <person name="Pukkila P.J."/>
            <person name="Richardson P.M."/>
            <person name="Rouze P."/>
            <person name="Sanders I.R."/>
            <person name="Stajich J.E."/>
            <person name="Tunlid A."/>
            <person name="Tuskan G."/>
            <person name="Grigoriev I.V."/>
        </authorList>
    </citation>
    <scope>NUCLEOTIDE SEQUENCE [LARGE SCALE GENOMIC DNA]</scope>
    <source>
        <strain>S238N-H82 / ATCC MYA-4686</strain>
    </source>
</reference>
<reference key="2">
    <citation type="journal article" date="2014" name="BMC Genomics">
        <title>Comparative transcriptomics of the model mushroom Coprinopsis cinerea reveals tissue-specific armories and a conserved circuitry for sexual development.</title>
        <authorList>
            <person name="Plaza D.F."/>
            <person name="Lin C.W."/>
            <person name="van der Velden N.S."/>
            <person name="Aebi M."/>
            <person name="Kuenzler M."/>
        </authorList>
    </citation>
    <scope>INDUCTION</scope>
</reference>
<feature type="chain" id="PRO_0000435912" description="Velvet complex subunit B">
    <location>
        <begin position="1"/>
        <end position="485"/>
    </location>
</feature>
<feature type="domain" description="Velvet" evidence="2">
    <location>
        <begin position="33"/>
        <end position="459"/>
    </location>
</feature>
<feature type="region of interest" description="Disordered" evidence="3">
    <location>
        <begin position="107"/>
        <end position="353"/>
    </location>
</feature>
<feature type="compositionally biased region" description="Polar residues" evidence="3">
    <location>
        <begin position="134"/>
        <end position="155"/>
    </location>
</feature>
<feature type="compositionally biased region" description="Polar residues" evidence="3">
    <location>
        <begin position="234"/>
        <end position="243"/>
    </location>
</feature>
<feature type="compositionally biased region" description="Polar residues" evidence="3">
    <location>
        <begin position="267"/>
        <end position="304"/>
    </location>
</feature>
<feature type="compositionally biased region" description="Polar residues" evidence="3">
    <location>
        <begin position="326"/>
        <end position="341"/>
    </location>
</feature>
<proteinExistence type="evidence at transcript level"/>
<accession>B0CXQ2</accession>
<keyword id="KW-0963">Cytoplasm</keyword>
<keyword id="KW-0539">Nucleus</keyword>
<keyword id="KW-1185">Reference proteome</keyword>
<keyword id="KW-0749">Sporulation</keyword>
<keyword id="KW-0804">Transcription</keyword>
<keyword id="KW-0805">Transcription regulation</keyword>
<evidence type="ECO:0000250" key="1">
    <source>
        <dbReference type="UniProtKB" id="C8VTS4"/>
    </source>
</evidence>
<evidence type="ECO:0000255" key="2">
    <source>
        <dbReference type="PROSITE-ProRule" id="PRU01165"/>
    </source>
</evidence>
<evidence type="ECO:0000256" key="3">
    <source>
        <dbReference type="SAM" id="MobiDB-lite"/>
    </source>
</evidence>
<evidence type="ECO:0000269" key="4">
    <source>
    </source>
</evidence>
<evidence type="ECO:0000303" key="5">
    <source>
    </source>
</evidence>
<evidence type="ECO:0000305" key="6"/>
<organism>
    <name type="scientific">Laccaria bicolor (strain S238N-H82 / ATCC MYA-4686)</name>
    <name type="common">Bicoloured deceiver</name>
    <name type="synonym">Laccaria laccata var. bicolor</name>
    <dbReference type="NCBI Taxonomy" id="486041"/>
    <lineage>
        <taxon>Eukaryota</taxon>
        <taxon>Fungi</taxon>
        <taxon>Dikarya</taxon>
        <taxon>Basidiomycota</taxon>
        <taxon>Agaricomycotina</taxon>
        <taxon>Agaricomycetes</taxon>
        <taxon>Agaricomycetidae</taxon>
        <taxon>Agaricales</taxon>
        <taxon>Agaricineae</taxon>
        <taxon>Hydnangiaceae</taxon>
        <taxon>Laccaria</taxon>
    </lineage>
</organism>
<dbReference type="EMBL" id="DS547094">
    <property type="protein sequence ID" value="EDR12301.1"/>
    <property type="molecule type" value="Genomic_DNA"/>
</dbReference>
<dbReference type="RefSeq" id="XP_001876565.1">
    <property type="nucleotide sequence ID" value="XM_001876530.1"/>
</dbReference>
<dbReference type="SMR" id="B0CXQ2"/>
<dbReference type="STRING" id="486041.B0CXQ2"/>
<dbReference type="GeneID" id="6072863"/>
<dbReference type="KEGG" id="lbc:LACBIDRAFT_292785"/>
<dbReference type="HOGENOM" id="CLU_022491_4_0_1"/>
<dbReference type="InParanoid" id="B0CXQ2"/>
<dbReference type="OrthoDB" id="1746739at2759"/>
<dbReference type="Proteomes" id="UP000001194">
    <property type="component" value="Unassembled WGS sequence"/>
</dbReference>
<dbReference type="GO" id="GO:0005737">
    <property type="term" value="C:cytoplasm"/>
    <property type="evidence" value="ECO:0007669"/>
    <property type="project" value="UniProtKB-SubCell"/>
</dbReference>
<dbReference type="GO" id="GO:0005634">
    <property type="term" value="C:nucleus"/>
    <property type="evidence" value="ECO:0007669"/>
    <property type="project" value="UniProtKB-SubCell"/>
</dbReference>
<dbReference type="GO" id="GO:0030435">
    <property type="term" value="P:sporulation resulting in formation of a cellular spore"/>
    <property type="evidence" value="ECO:0007669"/>
    <property type="project" value="UniProtKB-KW"/>
</dbReference>
<dbReference type="Gene3D" id="2.60.40.3960">
    <property type="entry name" value="Velvet domain"/>
    <property type="match status" value="2"/>
</dbReference>
<dbReference type="InterPro" id="IPR021740">
    <property type="entry name" value="Velvet"/>
</dbReference>
<dbReference type="InterPro" id="IPR037525">
    <property type="entry name" value="Velvet_dom"/>
</dbReference>
<dbReference type="InterPro" id="IPR038491">
    <property type="entry name" value="Velvet_dom_sf"/>
</dbReference>
<dbReference type="PANTHER" id="PTHR33572">
    <property type="entry name" value="SPORE DEVELOPMENT REGULATOR VOSA"/>
    <property type="match status" value="1"/>
</dbReference>
<dbReference type="PANTHER" id="PTHR33572:SF3">
    <property type="entry name" value="VELVET COMPLEX SUBUNIT B"/>
    <property type="match status" value="1"/>
</dbReference>
<dbReference type="Pfam" id="PF11754">
    <property type="entry name" value="Velvet"/>
    <property type="match status" value="1"/>
</dbReference>
<dbReference type="PROSITE" id="PS51821">
    <property type="entry name" value="VELVET"/>
    <property type="match status" value="1"/>
</dbReference>
<sequence length="485" mass="52958">MIQHTNARQSSVAIAPLRQLVSDSPEQWGYWLGRKHYSLEVVQHPLRARMCGFGDKDRRPLAPAAVAKMVVRRDDNSIVDVDDMDCSFFLVTVDLWSEDGKHETNLVLHPSSVDRHIPPHSSTKSRRRGTSSSAPQSRAPANQTPSGGSTPTLSQHRPGEQRPPLPHPHASGYNNQGYVTPHAPQVNDALGFPPSTPYGPTQADSSWGYPPPPPGDRSTSFPHPTLPSIHTLGRSPSSSTSDHWNSEPEPQSLPYGAWNTDAPYHPSISSYSNSQVDPSVRNHSNSEGIENPGWSSSEATSPHSQADHAAYESSTYHHSAYHPAPTHSQMAPGTCSSQHVSTVPPPPRHTYTRTLVGPLSANACRLLDEHRKPGIFFLFQDLSVRTEGTFRLRMRLMNVGAPPAPEVGAARVHNDVSPVLAQTFTEQFTVYSAKRFPGVPDTTALSIALGNQGQKLPLASDGLSEALVEESSRVQQASETQWFRV</sequence>